<organism>
    <name type="scientific">Clostridium perfringens (strain ATCC 13124 / DSM 756 / JCM 1290 / NCIMB 6125 / NCTC 8237 / Type A)</name>
    <dbReference type="NCBI Taxonomy" id="195103"/>
    <lineage>
        <taxon>Bacteria</taxon>
        <taxon>Bacillati</taxon>
        <taxon>Bacillota</taxon>
        <taxon>Clostridia</taxon>
        <taxon>Eubacteriales</taxon>
        <taxon>Clostridiaceae</taxon>
        <taxon>Clostridium</taxon>
    </lineage>
</organism>
<protein>
    <recommendedName>
        <fullName evidence="1">Argininosuccinate synthase</fullName>
        <ecNumber evidence="1">6.3.4.5</ecNumber>
    </recommendedName>
    <alternativeName>
        <fullName evidence="1">Citrulline--aspartate ligase</fullName>
    </alternativeName>
</protein>
<gene>
    <name evidence="1" type="primary">argG</name>
    <name type="ordered locus">CPF_0683</name>
</gene>
<name>ASSY_CLOP1</name>
<dbReference type="EC" id="6.3.4.5" evidence="1"/>
<dbReference type="EMBL" id="CP000246">
    <property type="protein sequence ID" value="ABG83150.1"/>
    <property type="molecule type" value="Genomic_DNA"/>
</dbReference>
<dbReference type="RefSeq" id="WP_011590305.1">
    <property type="nucleotide sequence ID" value="NC_008261.1"/>
</dbReference>
<dbReference type="SMR" id="Q0TTA5"/>
<dbReference type="STRING" id="195103.CPF_0683"/>
<dbReference type="PaxDb" id="195103-CPF_0683"/>
<dbReference type="KEGG" id="cpf:CPF_0683"/>
<dbReference type="eggNOG" id="COG0137">
    <property type="taxonomic scope" value="Bacteria"/>
</dbReference>
<dbReference type="HOGENOM" id="CLU_032784_4_2_9"/>
<dbReference type="UniPathway" id="UPA00068">
    <property type="reaction ID" value="UER00113"/>
</dbReference>
<dbReference type="Proteomes" id="UP000001823">
    <property type="component" value="Chromosome"/>
</dbReference>
<dbReference type="GO" id="GO:0005737">
    <property type="term" value="C:cytoplasm"/>
    <property type="evidence" value="ECO:0007669"/>
    <property type="project" value="UniProtKB-SubCell"/>
</dbReference>
<dbReference type="GO" id="GO:0004055">
    <property type="term" value="F:argininosuccinate synthase activity"/>
    <property type="evidence" value="ECO:0007669"/>
    <property type="project" value="UniProtKB-UniRule"/>
</dbReference>
<dbReference type="GO" id="GO:0005524">
    <property type="term" value="F:ATP binding"/>
    <property type="evidence" value="ECO:0007669"/>
    <property type="project" value="UniProtKB-UniRule"/>
</dbReference>
<dbReference type="GO" id="GO:0000053">
    <property type="term" value="P:argininosuccinate metabolic process"/>
    <property type="evidence" value="ECO:0007669"/>
    <property type="project" value="TreeGrafter"/>
</dbReference>
<dbReference type="GO" id="GO:0006526">
    <property type="term" value="P:L-arginine biosynthetic process"/>
    <property type="evidence" value="ECO:0007669"/>
    <property type="project" value="UniProtKB-UniRule"/>
</dbReference>
<dbReference type="GO" id="GO:0000050">
    <property type="term" value="P:urea cycle"/>
    <property type="evidence" value="ECO:0007669"/>
    <property type="project" value="TreeGrafter"/>
</dbReference>
<dbReference type="CDD" id="cd01999">
    <property type="entry name" value="ASS"/>
    <property type="match status" value="1"/>
</dbReference>
<dbReference type="FunFam" id="3.40.50.620:FF:000019">
    <property type="entry name" value="Argininosuccinate synthase"/>
    <property type="match status" value="1"/>
</dbReference>
<dbReference type="FunFam" id="3.90.1260.10:FF:000007">
    <property type="entry name" value="Argininosuccinate synthase"/>
    <property type="match status" value="1"/>
</dbReference>
<dbReference type="Gene3D" id="3.90.1260.10">
    <property type="entry name" value="Argininosuccinate synthetase, chain A, domain 2"/>
    <property type="match status" value="1"/>
</dbReference>
<dbReference type="Gene3D" id="3.40.50.620">
    <property type="entry name" value="HUPs"/>
    <property type="match status" value="1"/>
</dbReference>
<dbReference type="Gene3D" id="1.20.5.470">
    <property type="entry name" value="Single helix bin"/>
    <property type="match status" value="1"/>
</dbReference>
<dbReference type="HAMAP" id="MF_00005">
    <property type="entry name" value="Arg_succ_synth_type1"/>
    <property type="match status" value="1"/>
</dbReference>
<dbReference type="InterPro" id="IPR048268">
    <property type="entry name" value="Arginosuc_syn_C"/>
</dbReference>
<dbReference type="InterPro" id="IPR048267">
    <property type="entry name" value="Arginosuc_syn_N"/>
</dbReference>
<dbReference type="InterPro" id="IPR001518">
    <property type="entry name" value="Arginosuc_synth"/>
</dbReference>
<dbReference type="InterPro" id="IPR018223">
    <property type="entry name" value="Arginosuc_synth_CS"/>
</dbReference>
<dbReference type="InterPro" id="IPR023434">
    <property type="entry name" value="Arginosuc_synth_type_1_subfam"/>
</dbReference>
<dbReference type="InterPro" id="IPR024074">
    <property type="entry name" value="AS_cat/multimer_dom_body"/>
</dbReference>
<dbReference type="InterPro" id="IPR014729">
    <property type="entry name" value="Rossmann-like_a/b/a_fold"/>
</dbReference>
<dbReference type="NCBIfam" id="TIGR00032">
    <property type="entry name" value="argG"/>
    <property type="match status" value="1"/>
</dbReference>
<dbReference type="NCBIfam" id="NF001770">
    <property type="entry name" value="PRK00509.1"/>
    <property type="match status" value="1"/>
</dbReference>
<dbReference type="PANTHER" id="PTHR11587">
    <property type="entry name" value="ARGININOSUCCINATE SYNTHASE"/>
    <property type="match status" value="1"/>
</dbReference>
<dbReference type="PANTHER" id="PTHR11587:SF2">
    <property type="entry name" value="ARGININOSUCCINATE SYNTHASE"/>
    <property type="match status" value="1"/>
</dbReference>
<dbReference type="Pfam" id="PF20979">
    <property type="entry name" value="Arginosuc_syn_C"/>
    <property type="match status" value="1"/>
</dbReference>
<dbReference type="Pfam" id="PF00764">
    <property type="entry name" value="Arginosuc_synth"/>
    <property type="match status" value="1"/>
</dbReference>
<dbReference type="SUPFAM" id="SSF52402">
    <property type="entry name" value="Adenine nucleotide alpha hydrolases-like"/>
    <property type="match status" value="1"/>
</dbReference>
<dbReference type="SUPFAM" id="SSF69864">
    <property type="entry name" value="Argininosuccinate synthetase, C-terminal domain"/>
    <property type="match status" value="1"/>
</dbReference>
<dbReference type="PROSITE" id="PS00564">
    <property type="entry name" value="ARGININOSUCCIN_SYN_1"/>
    <property type="match status" value="1"/>
</dbReference>
<dbReference type="PROSITE" id="PS00565">
    <property type="entry name" value="ARGININOSUCCIN_SYN_2"/>
    <property type="match status" value="1"/>
</dbReference>
<accession>Q0TTA5</accession>
<comment type="catalytic activity">
    <reaction evidence="1">
        <text>L-citrulline + L-aspartate + ATP = 2-(N(omega)-L-arginino)succinate + AMP + diphosphate + H(+)</text>
        <dbReference type="Rhea" id="RHEA:10932"/>
        <dbReference type="ChEBI" id="CHEBI:15378"/>
        <dbReference type="ChEBI" id="CHEBI:29991"/>
        <dbReference type="ChEBI" id="CHEBI:30616"/>
        <dbReference type="ChEBI" id="CHEBI:33019"/>
        <dbReference type="ChEBI" id="CHEBI:57472"/>
        <dbReference type="ChEBI" id="CHEBI:57743"/>
        <dbReference type="ChEBI" id="CHEBI:456215"/>
        <dbReference type="EC" id="6.3.4.5"/>
    </reaction>
</comment>
<comment type="pathway">
    <text evidence="1">Amino-acid biosynthesis; L-arginine biosynthesis; L-arginine from L-ornithine and carbamoyl phosphate: step 2/3.</text>
</comment>
<comment type="subunit">
    <text evidence="1">Homotetramer.</text>
</comment>
<comment type="subcellular location">
    <subcellularLocation>
        <location evidence="1">Cytoplasm</location>
    </subcellularLocation>
</comment>
<comment type="similarity">
    <text evidence="1">Belongs to the argininosuccinate synthase family. Type 1 subfamily.</text>
</comment>
<reference key="1">
    <citation type="journal article" date="2006" name="Genome Res.">
        <title>Skewed genomic variability in strains of the toxigenic bacterial pathogen, Clostridium perfringens.</title>
        <authorList>
            <person name="Myers G.S.A."/>
            <person name="Rasko D.A."/>
            <person name="Cheung J.K."/>
            <person name="Ravel J."/>
            <person name="Seshadri R."/>
            <person name="DeBoy R.T."/>
            <person name="Ren Q."/>
            <person name="Varga J."/>
            <person name="Awad M.M."/>
            <person name="Brinkac L.M."/>
            <person name="Daugherty S.C."/>
            <person name="Haft D.H."/>
            <person name="Dodson R.J."/>
            <person name="Madupu R."/>
            <person name="Nelson W.C."/>
            <person name="Rosovitz M.J."/>
            <person name="Sullivan S.A."/>
            <person name="Khouri H."/>
            <person name="Dimitrov G.I."/>
            <person name="Watkins K.L."/>
            <person name="Mulligan S."/>
            <person name="Benton J."/>
            <person name="Radune D."/>
            <person name="Fisher D.J."/>
            <person name="Atkins H.S."/>
            <person name="Hiscox T."/>
            <person name="Jost B.H."/>
            <person name="Billington S.J."/>
            <person name="Songer J.G."/>
            <person name="McClane B.A."/>
            <person name="Titball R.W."/>
            <person name="Rood J.I."/>
            <person name="Melville S.B."/>
            <person name="Paulsen I.T."/>
        </authorList>
    </citation>
    <scope>NUCLEOTIDE SEQUENCE [LARGE SCALE GENOMIC DNA]</scope>
    <source>
        <strain>ATCC 13124 / DSM 756 / JCM 1290 / NCIMB 6125 / NCTC 8237 / S 107 / Type A</strain>
    </source>
</reference>
<keyword id="KW-0028">Amino-acid biosynthesis</keyword>
<keyword id="KW-0055">Arginine biosynthesis</keyword>
<keyword id="KW-0067">ATP-binding</keyword>
<keyword id="KW-0963">Cytoplasm</keyword>
<keyword id="KW-0436">Ligase</keyword>
<keyword id="KW-0547">Nucleotide-binding</keyword>
<feature type="chain" id="PRO_0000263914" description="Argininosuccinate synthase">
    <location>
        <begin position="1"/>
        <end position="403"/>
    </location>
</feature>
<feature type="binding site" evidence="1">
    <location>
        <begin position="10"/>
        <end position="18"/>
    </location>
    <ligand>
        <name>ATP</name>
        <dbReference type="ChEBI" id="CHEBI:30616"/>
    </ligand>
</feature>
<feature type="binding site" evidence="1">
    <location>
        <position position="88"/>
    </location>
    <ligand>
        <name>L-citrulline</name>
        <dbReference type="ChEBI" id="CHEBI:57743"/>
    </ligand>
</feature>
<feature type="binding site" evidence="1">
    <location>
        <position position="93"/>
    </location>
    <ligand>
        <name>L-citrulline</name>
        <dbReference type="ChEBI" id="CHEBI:57743"/>
    </ligand>
</feature>
<feature type="binding site" evidence="1">
    <location>
        <position position="118"/>
    </location>
    <ligand>
        <name>ATP</name>
        <dbReference type="ChEBI" id="CHEBI:30616"/>
    </ligand>
</feature>
<feature type="binding site" evidence="1">
    <location>
        <position position="120"/>
    </location>
    <ligand>
        <name>L-aspartate</name>
        <dbReference type="ChEBI" id="CHEBI:29991"/>
    </ligand>
</feature>
<feature type="binding site" evidence="1">
    <location>
        <position position="124"/>
    </location>
    <ligand>
        <name>L-aspartate</name>
        <dbReference type="ChEBI" id="CHEBI:29991"/>
    </ligand>
</feature>
<feature type="binding site" evidence="1">
    <location>
        <position position="124"/>
    </location>
    <ligand>
        <name>L-citrulline</name>
        <dbReference type="ChEBI" id="CHEBI:57743"/>
    </ligand>
</feature>
<feature type="binding site" evidence="1">
    <location>
        <position position="125"/>
    </location>
    <ligand>
        <name>L-aspartate</name>
        <dbReference type="ChEBI" id="CHEBI:29991"/>
    </ligand>
</feature>
<feature type="binding site" evidence="1">
    <location>
        <position position="128"/>
    </location>
    <ligand>
        <name>L-citrulline</name>
        <dbReference type="ChEBI" id="CHEBI:57743"/>
    </ligand>
</feature>
<feature type="binding site" evidence="1">
    <location>
        <position position="177"/>
    </location>
    <ligand>
        <name>L-citrulline</name>
        <dbReference type="ChEBI" id="CHEBI:57743"/>
    </ligand>
</feature>
<feature type="binding site" evidence="1">
    <location>
        <position position="186"/>
    </location>
    <ligand>
        <name>L-citrulline</name>
        <dbReference type="ChEBI" id="CHEBI:57743"/>
    </ligand>
</feature>
<feature type="binding site" evidence="1">
    <location>
        <position position="263"/>
    </location>
    <ligand>
        <name>L-citrulline</name>
        <dbReference type="ChEBI" id="CHEBI:57743"/>
    </ligand>
</feature>
<feature type="binding site" evidence="1">
    <location>
        <position position="275"/>
    </location>
    <ligand>
        <name>L-citrulline</name>
        <dbReference type="ChEBI" id="CHEBI:57743"/>
    </ligand>
</feature>
<sequence>MKKFNKVILAYSGGLDTSIIIPWLKENYGCEVIAVVGNVGQSDELVGLKEKAIKTGASKIYIEDLTKEFVEDYIFPTIQAGAKYEGKYLLGTSFARPIIAKRLVEIAKLEGADAICHGCTGKGNDQVRFELAIKTFNPEMQIIAPWRTWEIKSREEEIQYAIDNEVPINITYETNYSKDKNLWHLSHEGLDLEFPENEPKYDKILELCNTLEKAPNEAEYITLGFEKGIATSLNGEKLDGVTLLQELNKIGGKHGIGVIDMVENRLVGMKSRGVYETPGGSILYKAHKDLEELCLDKETSHYKEIVSLKFADLVYNGQWFTPLREALSAFISKTQETVTGEIKLKLYKGNIINAGMTSPYSLYSEEYATFGEDGIYDQKDAEGFINLFSLPSIVQAKMAQKLN</sequence>
<evidence type="ECO:0000255" key="1">
    <source>
        <dbReference type="HAMAP-Rule" id="MF_00005"/>
    </source>
</evidence>
<proteinExistence type="inferred from homology"/>